<evidence type="ECO:0000250" key="1"/>
<evidence type="ECO:0000305" key="2"/>
<gene>
    <name type="primary">holB</name>
    <name type="ordered locus">PA2961</name>
</gene>
<name>HOLB_PSEAE</name>
<sequence>MADIYPWQQALWSQLGGRAQHAHAYLLYGPAGIGKRALAEHWAAQLLCQRPAAAGACGECKACQLLAAGTHPDYFVLEPEEAEKPIRVDQVRDLVGFVVQTAQLGGRKVVLLEPAEAMNVNAANALLKSLEEPSGDTVLLLISHQPSRLLPTIKSRCVQQACPLPGAAASLEWLARALPDEPAEALEELLALSGGSPLTAQRLHGQGVREQRAQVVEGVKKLLKQQIAASPLAESWNSVPLPLLFDWFCDWTLGILRYQLTHDEEGLGLADMRKVIQYLGDKSGQAKVLAMQDWLLQQRQKVLNKANLNRVLLLEALLVQWASLPGPG</sequence>
<accession>P52024</accession>
<comment type="function">
    <text evidence="1">DNA polymerase III is a complex, multichain enzyme responsible for most of the replicative synthesis in bacteria. This DNA polymerase also exhibits 3' to 5' exonuclease activity (By similarity).</text>
</comment>
<comment type="catalytic activity">
    <reaction>
        <text>DNA(n) + a 2'-deoxyribonucleoside 5'-triphosphate = DNA(n+1) + diphosphate</text>
        <dbReference type="Rhea" id="RHEA:22508"/>
        <dbReference type="Rhea" id="RHEA-COMP:17339"/>
        <dbReference type="Rhea" id="RHEA-COMP:17340"/>
        <dbReference type="ChEBI" id="CHEBI:33019"/>
        <dbReference type="ChEBI" id="CHEBI:61560"/>
        <dbReference type="ChEBI" id="CHEBI:173112"/>
        <dbReference type="EC" id="2.7.7.7"/>
    </reaction>
</comment>
<comment type="subunit">
    <text evidence="1">DNA polymerase III contains a core (composed of alpha, epsilon and theta chains) that associates with a tau subunit. This core dimerizes to form the POLIII' complex. PolIII' associates with the gamma complex (composed of gamma, delta, delta', psi and chi chains) and with the beta chain to form the complete DNA polymerase III complex (By similarity).</text>
</comment>
<protein>
    <recommendedName>
        <fullName>DNA polymerase III subunit delta'</fullName>
        <ecNumber>2.7.7.7</ecNumber>
    </recommendedName>
</protein>
<reference key="1">
    <citation type="journal article" date="1996" name="J. Bacteriol.">
        <title>Identification of a novel gene, pilZ, essential for type 4 fimbrial biogenesis in Pseudomonas aeruginosa.</title>
        <authorList>
            <person name="Alm R.A."/>
            <person name="Bodero A.J."/>
            <person name="Free P.D."/>
            <person name="Mattick J.S."/>
        </authorList>
    </citation>
    <scope>NUCLEOTIDE SEQUENCE [GENOMIC DNA]</scope>
    <source>
        <strain>ATCC 15692 / DSM 22644 / CIP 104116 / JCM 14847 / LMG 12228 / 1C / PRS 101 / PAO1</strain>
    </source>
</reference>
<reference key="2">
    <citation type="journal article" date="2000" name="Nature">
        <title>Complete genome sequence of Pseudomonas aeruginosa PAO1, an opportunistic pathogen.</title>
        <authorList>
            <person name="Stover C.K."/>
            <person name="Pham X.-Q.T."/>
            <person name="Erwin A.L."/>
            <person name="Mizoguchi S.D."/>
            <person name="Warrener P."/>
            <person name="Hickey M.J."/>
            <person name="Brinkman F.S.L."/>
            <person name="Hufnagle W.O."/>
            <person name="Kowalik D.J."/>
            <person name="Lagrou M."/>
            <person name="Garber R.L."/>
            <person name="Goltry L."/>
            <person name="Tolentino E."/>
            <person name="Westbrock-Wadman S."/>
            <person name="Yuan Y."/>
            <person name="Brody L.L."/>
            <person name="Coulter S.N."/>
            <person name="Folger K.R."/>
            <person name="Kas A."/>
            <person name="Larbig K."/>
            <person name="Lim R.M."/>
            <person name="Smith K.A."/>
            <person name="Spencer D.H."/>
            <person name="Wong G.K.-S."/>
            <person name="Wu Z."/>
            <person name="Paulsen I.T."/>
            <person name="Reizer J."/>
            <person name="Saier M.H. Jr."/>
            <person name="Hancock R.E.W."/>
            <person name="Lory S."/>
            <person name="Olson M.V."/>
        </authorList>
    </citation>
    <scope>NUCLEOTIDE SEQUENCE [LARGE SCALE GENOMIC DNA]</scope>
    <source>
        <strain>ATCC 15692 / DSM 22644 / CIP 104116 / JCM 14847 / LMG 12228 / 1C / PRS 101 / PAO1</strain>
    </source>
</reference>
<keyword id="KW-0235">DNA replication</keyword>
<keyword id="KW-0239">DNA-directed DNA polymerase</keyword>
<keyword id="KW-0548">Nucleotidyltransferase</keyword>
<keyword id="KW-1185">Reference proteome</keyword>
<keyword id="KW-0808">Transferase</keyword>
<proteinExistence type="inferred from homology"/>
<feature type="chain" id="PRO_0000105515" description="DNA polymerase III subunit delta'">
    <location>
        <begin position="1"/>
        <end position="328"/>
    </location>
</feature>
<feature type="sequence conflict" description="In Ref. 1; AAA93518." evidence="2" ref="1">
    <original>GGRAQHAHAYLLYGP</original>
    <variation>RPRPARPRLSALAS</variation>
    <location>
        <begin position="16"/>
        <end position="30"/>
    </location>
</feature>
<feature type="sequence conflict" description="In Ref. 1; AAA93518." evidence="2" ref="1">
    <original>CQRPA</original>
    <variation>TRAC</variation>
    <location>
        <begin position="48"/>
        <end position="52"/>
    </location>
</feature>
<feature type="sequence conflict" description="In Ref. 1; AAA93518." evidence="2" ref="1">
    <original>RA</original>
    <variation>PG</variation>
    <location>
        <begin position="176"/>
        <end position="177"/>
    </location>
</feature>
<feature type="sequence conflict" description="In Ref. 1; AAA93518." evidence="2" ref="1">
    <original>VR</original>
    <variation>AG</variation>
    <location>
        <begin position="208"/>
        <end position="209"/>
    </location>
</feature>
<feature type="sequence conflict" description="In Ref. 1." evidence="2" ref="1">
    <original>SVPLPLLFDWFCDW</original>
    <variation>RVPIAIALRLVLRL</variation>
    <location>
        <begin position="238"/>
        <end position="251"/>
    </location>
</feature>
<feature type="sequence conflict" description="In Ref. 1; AAA93518." evidence="2" ref="1">
    <original>QA</original>
    <variation>HR</variation>
    <location>
        <begin position="285"/>
        <end position="286"/>
    </location>
</feature>
<feature type="sequence conflict" description="In Ref. 1; AAA93518." evidence="2" ref="1">
    <original>A</original>
    <variation>G</variation>
    <location>
        <position position="322"/>
    </location>
</feature>
<dbReference type="EC" id="2.7.7.7"/>
<dbReference type="EMBL" id="L42622">
    <property type="protein sequence ID" value="AAA93518.1"/>
    <property type="molecule type" value="Genomic_DNA"/>
</dbReference>
<dbReference type="EMBL" id="AE004091">
    <property type="protein sequence ID" value="AAG06349.1"/>
    <property type="molecule type" value="Genomic_DNA"/>
</dbReference>
<dbReference type="PIR" id="A59241">
    <property type="entry name" value="A59241"/>
</dbReference>
<dbReference type="PIR" id="D83275">
    <property type="entry name" value="D83275"/>
</dbReference>
<dbReference type="RefSeq" id="NP_251651.1">
    <property type="nucleotide sequence ID" value="NC_002516.2"/>
</dbReference>
<dbReference type="RefSeq" id="WP_003104126.1">
    <property type="nucleotide sequence ID" value="NZ_QZGE01000009.1"/>
</dbReference>
<dbReference type="SMR" id="P52024"/>
<dbReference type="FunCoup" id="P52024">
    <property type="interactions" value="207"/>
</dbReference>
<dbReference type="STRING" id="208964.PA2961"/>
<dbReference type="PaxDb" id="208964-PA2961"/>
<dbReference type="GeneID" id="880379"/>
<dbReference type="KEGG" id="pae:PA2961"/>
<dbReference type="PATRIC" id="fig|208964.12.peg.3107"/>
<dbReference type="PseudoCAP" id="PA2961"/>
<dbReference type="HOGENOM" id="CLU_006229_4_3_6"/>
<dbReference type="InParanoid" id="P52024"/>
<dbReference type="OrthoDB" id="9811073at2"/>
<dbReference type="PhylomeDB" id="P52024"/>
<dbReference type="BioCyc" id="PAER208964:G1FZ6-3013-MONOMER"/>
<dbReference type="Proteomes" id="UP000002438">
    <property type="component" value="Chromosome"/>
</dbReference>
<dbReference type="GO" id="GO:0009360">
    <property type="term" value="C:DNA polymerase III complex"/>
    <property type="evidence" value="ECO:0000318"/>
    <property type="project" value="GO_Central"/>
</dbReference>
<dbReference type="GO" id="GO:0008408">
    <property type="term" value="F:3'-5' exonuclease activity"/>
    <property type="evidence" value="ECO:0007669"/>
    <property type="project" value="InterPro"/>
</dbReference>
<dbReference type="GO" id="GO:0003677">
    <property type="term" value="F:DNA binding"/>
    <property type="evidence" value="ECO:0007669"/>
    <property type="project" value="InterPro"/>
</dbReference>
<dbReference type="GO" id="GO:0003887">
    <property type="term" value="F:DNA-directed DNA polymerase activity"/>
    <property type="evidence" value="ECO:0007669"/>
    <property type="project" value="UniProtKB-KW"/>
</dbReference>
<dbReference type="GO" id="GO:0006261">
    <property type="term" value="P:DNA-templated DNA replication"/>
    <property type="evidence" value="ECO:0000318"/>
    <property type="project" value="GO_Central"/>
</dbReference>
<dbReference type="FunFam" id="3.40.50.300:FF:001108">
    <property type="entry name" value="DNA polymerase III subunit delta"/>
    <property type="match status" value="1"/>
</dbReference>
<dbReference type="Gene3D" id="1.20.272.10">
    <property type="match status" value="1"/>
</dbReference>
<dbReference type="Gene3D" id="3.40.50.300">
    <property type="entry name" value="P-loop containing nucleotide triphosphate hydrolases"/>
    <property type="match status" value="1"/>
</dbReference>
<dbReference type="InterPro" id="IPR004622">
    <property type="entry name" value="DNA_pol_HolB"/>
</dbReference>
<dbReference type="InterPro" id="IPR015199">
    <property type="entry name" value="DNA_pol_III_delta_C"/>
</dbReference>
<dbReference type="InterPro" id="IPR050238">
    <property type="entry name" value="DNA_Rep/Repair_Clamp_Loader"/>
</dbReference>
<dbReference type="InterPro" id="IPR027417">
    <property type="entry name" value="P-loop_NTPase"/>
</dbReference>
<dbReference type="NCBIfam" id="TIGR00678">
    <property type="entry name" value="holB"/>
    <property type="match status" value="1"/>
</dbReference>
<dbReference type="NCBIfam" id="NF004310">
    <property type="entry name" value="PRK05707.1"/>
    <property type="match status" value="1"/>
</dbReference>
<dbReference type="PANTHER" id="PTHR11669:SF8">
    <property type="entry name" value="DNA POLYMERASE III SUBUNIT DELTA"/>
    <property type="match status" value="1"/>
</dbReference>
<dbReference type="PANTHER" id="PTHR11669">
    <property type="entry name" value="REPLICATION FACTOR C / DNA POLYMERASE III GAMMA-TAU SUBUNIT"/>
    <property type="match status" value="1"/>
</dbReference>
<dbReference type="Pfam" id="PF13177">
    <property type="entry name" value="DNA_pol3_delta2"/>
    <property type="match status" value="1"/>
</dbReference>
<dbReference type="Pfam" id="PF09115">
    <property type="entry name" value="DNApol3-delta_C"/>
    <property type="match status" value="1"/>
</dbReference>
<dbReference type="SUPFAM" id="SSF52540">
    <property type="entry name" value="P-loop containing nucleoside triphosphate hydrolases"/>
    <property type="match status" value="1"/>
</dbReference>
<organism>
    <name type="scientific">Pseudomonas aeruginosa (strain ATCC 15692 / DSM 22644 / CIP 104116 / JCM 14847 / LMG 12228 / 1C / PRS 101 / PAO1)</name>
    <dbReference type="NCBI Taxonomy" id="208964"/>
    <lineage>
        <taxon>Bacteria</taxon>
        <taxon>Pseudomonadati</taxon>
        <taxon>Pseudomonadota</taxon>
        <taxon>Gammaproteobacteria</taxon>
        <taxon>Pseudomonadales</taxon>
        <taxon>Pseudomonadaceae</taxon>
        <taxon>Pseudomonas</taxon>
    </lineage>
</organism>